<comment type="function">
    <text evidence="1 3">Multifunctional regulatory protein whose primary function is to antagonize members of the transforming growth factor beta (TGF-beta) superfamily including activin, myostatin, GDF11 or bone morphogenetic proteins (BMPs). Mechanistically, binds to these ligands in the extracellular space, blocking their type II receptor-binding site to inhibit downstream signaling (By similarity). Plays an essential role in muscle fiber formation and growth both by preventing the repressive effects of myostatin and through SMAD3/AKT/mTOR signaling independently of myostatin (By similarity). Also promotes neural differentiation by antagonizing the action BMP4 (By similarity). Acts as a specific inhibitor of the biosynthesis and secretion of pituitary follicle stimulating hormone (FSH) by sequestering activin A/INHBA. On the other hand, translocates into the nucleus where it down-regulates rRNA synthesis and ribosome biogenesis to maintain cellular energy homeostasis by binding to rDNA (By similarity).</text>
</comment>
<comment type="subunit">
    <text evidence="1">Interacts with GDF11. Interacts with activin A/INHBA. Interacts with myostatin/MSTN.</text>
</comment>
<comment type="subcellular location">
    <subcellularLocation>
        <location evidence="1">Secreted</location>
    </subcellularLocation>
    <subcellularLocation>
        <location evidence="1">Nucleus</location>
        <location evidence="1">Nucleolus</location>
    </subcellularLocation>
</comment>
<gene>
    <name evidence="1" type="primary">FST</name>
</gene>
<proteinExistence type="evidence at transcript level"/>
<organism>
    <name type="scientific">Equus caballus</name>
    <name type="common">Horse</name>
    <dbReference type="NCBI Taxonomy" id="9796"/>
    <lineage>
        <taxon>Eukaryota</taxon>
        <taxon>Metazoa</taxon>
        <taxon>Chordata</taxon>
        <taxon>Craniata</taxon>
        <taxon>Vertebrata</taxon>
        <taxon>Euteleostomi</taxon>
        <taxon>Mammalia</taxon>
        <taxon>Eutheria</taxon>
        <taxon>Laurasiatheria</taxon>
        <taxon>Perissodactyla</taxon>
        <taxon>Equidae</taxon>
        <taxon>Equus</taxon>
    </lineage>
</organism>
<protein>
    <recommendedName>
        <fullName evidence="8">Follistatin</fullName>
        <shortName>FS</shortName>
    </recommendedName>
    <alternativeName>
        <fullName evidence="2">Activin-binding protein</fullName>
    </alternativeName>
</protein>
<keyword id="KW-1015">Disulfide bond</keyword>
<keyword id="KW-0325">Glycoprotein</keyword>
<keyword id="KW-0539">Nucleus</keyword>
<keyword id="KW-1185">Reference proteome</keyword>
<keyword id="KW-0677">Repeat</keyword>
<keyword id="KW-0964">Secreted</keyword>
<keyword id="KW-0732">Signal</keyword>
<sequence>MVRPRHQPGGLCLLLLLLCQFMEDRSAQAGNCWLRQAKNGRCQVLYKTELSKEECCSTGRLSTSWTEEDVNDNTLFKWMIFNGGAPNCIPCKETCDNVDCGPGKKCRMNKKNKPRCVCAPDCSNITWKGPVCGLDGKTYRNECALLKARCKEQPELEVQYQGKCKKTCRDVNCPGSSTCVVDQTNNAYCVTCNRICPEPTSSEQYLCGNDGVTYSSACHLRKATCLLGRSIGLAYEGKCIKAKSCEDIQCTGGKKCLWDFKVGRGRCSLCDELCPDSKSEEPVCASDNATYASECAMKEAACSSGVLLEVKHSGSCNSISEDTEEEEEDEDQDYSFPISSILEW</sequence>
<feature type="signal peptide" evidence="4">
    <location>
        <begin position="1"/>
        <end position="29"/>
    </location>
</feature>
<feature type="chain" id="PRO_0000010102" description="Follistatin">
    <location>
        <begin position="30"/>
        <end position="344"/>
    </location>
</feature>
<feature type="domain" description="TB" evidence="5">
    <location>
        <begin position="30"/>
        <end position="103"/>
    </location>
</feature>
<feature type="domain" description="Follistatin-like 1">
    <location>
        <begin position="94"/>
        <end position="117"/>
    </location>
</feature>
<feature type="domain" description="Kazal-like 1" evidence="6">
    <location>
        <begin position="112"/>
        <end position="166"/>
    </location>
</feature>
<feature type="domain" description="Follistatin-like 2">
    <location>
        <begin position="167"/>
        <end position="190"/>
    </location>
</feature>
<feature type="domain" description="Kazal-like 2" evidence="6">
    <location>
        <begin position="186"/>
        <end position="241"/>
    </location>
</feature>
<feature type="domain" description="Follistatin-like 3">
    <location>
        <begin position="244"/>
        <end position="268"/>
    </location>
</feature>
<feature type="domain" description="Kazal-like 3" evidence="6">
    <location>
        <begin position="264"/>
        <end position="318"/>
    </location>
</feature>
<feature type="region of interest" description="Disordered" evidence="7">
    <location>
        <begin position="314"/>
        <end position="344"/>
    </location>
</feature>
<feature type="compositionally biased region" description="Acidic residues" evidence="7">
    <location>
        <begin position="321"/>
        <end position="333"/>
    </location>
</feature>
<feature type="glycosylation site" description="N-linked (GlcNAc...) asparagine" evidence="4">
    <location>
        <position position="124"/>
    </location>
</feature>
<feature type="glycosylation site" description="N-linked (GlcNAc...) asparagine" evidence="4">
    <location>
        <position position="288"/>
    </location>
</feature>
<feature type="disulfide bond" evidence="1 5">
    <location>
        <begin position="32"/>
        <end position="55"/>
    </location>
</feature>
<feature type="disulfide bond" evidence="1 5">
    <location>
        <begin position="42"/>
        <end position="88"/>
    </location>
</feature>
<feature type="disulfide bond" evidence="1 5">
    <location>
        <begin position="56"/>
        <end position="91"/>
    </location>
</feature>
<feature type="disulfide bond" evidence="1">
    <location>
        <begin position="95"/>
        <end position="106"/>
    </location>
</feature>
<feature type="disulfide bond" evidence="1">
    <location>
        <begin position="100"/>
        <end position="116"/>
    </location>
</feature>
<feature type="disulfide bond" evidence="1">
    <location>
        <begin position="118"/>
        <end position="150"/>
    </location>
</feature>
<feature type="disulfide bond" evidence="1">
    <location>
        <begin position="122"/>
        <end position="143"/>
    </location>
</feature>
<feature type="disulfide bond" evidence="1">
    <location>
        <begin position="132"/>
        <end position="164"/>
    </location>
</feature>
<feature type="disulfide bond" evidence="1">
    <location>
        <begin position="168"/>
        <end position="179"/>
    </location>
</feature>
<feature type="disulfide bond" evidence="1">
    <location>
        <begin position="173"/>
        <end position="189"/>
    </location>
</feature>
<feature type="disulfide bond" evidence="1">
    <location>
        <begin position="192"/>
        <end position="225"/>
    </location>
</feature>
<feature type="disulfide bond" evidence="1">
    <location>
        <begin position="196"/>
        <end position="218"/>
    </location>
</feature>
<feature type="disulfide bond" evidence="1">
    <location>
        <begin position="207"/>
        <end position="239"/>
    </location>
</feature>
<feature type="disulfide bond" evidence="1">
    <location>
        <begin position="245"/>
        <end position="256"/>
    </location>
</feature>
<feature type="disulfide bond" evidence="1">
    <location>
        <begin position="250"/>
        <end position="267"/>
    </location>
</feature>
<feature type="disulfide bond" evidence="1">
    <location>
        <begin position="270"/>
        <end position="302"/>
    </location>
</feature>
<feature type="disulfide bond" evidence="1">
    <location>
        <begin position="274"/>
        <end position="295"/>
    </location>
</feature>
<feature type="disulfide bond" evidence="1">
    <location>
        <begin position="284"/>
        <end position="316"/>
    </location>
</feature>
<dbReference type="EMBL" id="AB010829">
    <property type="protein sequence ID" value="BAA25699.1"/>
    <property type="molecule type" value="mRNA"/>
</dbReference>
<dbReference type="RefSeq" id="NP_001075280.1">
    <property type="nucleotide sequence ID" value="NM_001081811.2"/>
</dbReference>
<dbReference type="SMR" id="O62650"/>
<dbReference type="FunCoup" id="O62650">
    <property type="interactions" value="84"/>
</dbReference>
<dbReference type="STRING" id="9796.ENSECAP00000015558"/>
<dbReference type="MEROPS" id="I01.966"/>
<dbReference type="GlyCosmos" id="O62650">
    <property type="glycosylation" value="2 sites, No reported glycans"/>
</dbReference>
<dbReference type="PaxDb" id="9796-ENSECAP00000015558"/>
<dbReference type="GeneID" id="100033825"/>
<dbReference type="KEGG" id="ecb:100033825"/>
<dbReference type="CTD" id="10468"/>
<dbReference type="HOGENOM" id="CLU_050745_0_0_1"/>
<dbReference type="InParanoid" id="O62650"/>
<dbReference type="OMA" id="DYKAYVH"/>
<dbReference type="OrthoDB" id="6614329at2759"/>
<dbReference type="Proteomes" id="UP000002281">
    <property type="component" value="Chromosome 21"/>
</dbReference>
<dbReference type="Bgee" id="ENSECAG00000017783">
    <property type="expression patterns" value="Expressed in trophoblast and 19 other cell types or tissues"/>
</dbReference>
<dbReference type="ExpressionAtlas" id="O62650">
    <property type="expression patterns" value="baseline"/>
</dbReference>
<dbReference type="GO" id="GO:0005576">
    <property type="term" value="C:extracellular region"/>
    <property type="evidence" value="ECO:0000318"/>
    <property type="project" value="GO_Central"/>
</dbReference>
<dbReference type="GO" id="GO:0005615">
    <property type="term" value="C:extracellular space"/>
    <property type="evidence" value="ECO:0000318"/>
    <property type="project" value="GO_Central"/>
</dbReference>
<dbReference type="GO" id="GO:0005730">
    <property type="term" value="C:nucleolus"/>
    <property type="evidence" value="ECO:0007669"/>
    <property type="project" value="UniProtKB-SubCell"/>
</dbReference>
<dbReference type="GO" id="GO:0048185">
    <property type="term" value="F:activin binding"/>
    <property type="evidence" value="ECO:0000318"/>
    <property type="project" value="GO_Central"/>
</dbReference>
<dbReference type="GO" id="GO:0030154">
    <property type="term" value="P:cell differentiation"/>
    <property type="evidence" value="ECO:0000318"/>
    <property type="project" value="GO_Central"/>
</dbReference>
<dbReference type="GO" id="GO:0032926">
    <property type="term" value="P:negative regulation of activin receptor signaling pathway"/>
    <property type="evidence" value="ECO:0000318"/>
    <property type="project" value="GO_Central"/>
</dbReference>
<dbReference type="GO" id="GO:0030510">
    <property type="term" value="P:regulation of BMP signaling pathway"/>
    <property type="evidence" value="ECO:0000318"/>
    <property type="project" value="GO_Central"/>
</dbReference>
<dbReference type="CDD" id="cd00104">
    <property type="entry name" value="KAZAL_FS"/>
    <property type="match status" value="2"/>
</dbReference>
<dbReference type="FunFam" id="3.30.60.30:FF:000005">
    <property type="entry name" value="Follistatin a"/>
    <property type="match status" value="1"/>
</dbReference>
<dbReference type="FunFam" id="3.30.60.30:FF:000006">
    <property type="entry name" value="Follistatin a"/>
    <property type="match status" value="1"/>
</dbReference>
<dbReference type="FunFam" id="3.30.60.30:FF:000009">
    <property type="entry name" value="Follistatin a"/>
    <property type="match status" value="1"/>
</dbReference>
<dbReference type="FunFam" id="3.90.290.10:FF:000013">
    <property type="entry name" value="Follistatin a"/>
    <property type="match status" value="1"/>
</dbReference>
<dbReference type="Gene3D" id="3.30.60.30">
    <property type="match status" value="3"/>
</dbReference>
<dbReference type="Gene3D" id="3.90.290.10">
    <property type="entry name" value="TGF-beta binding (TB) domain"/>
    <property type="match status" value="1"/>
</dbReference>
<dbReference type="InterPro" id="IPR003645">
    <property type="entry name" value="Fol_N"/>
</dbReference>
<dbReference type="InterPro" id="IPR015369">
    <property type="entry name" value="Follistatin/Osteonectin_EGF"/>
</dbReference>
<dbReference type="InterPro" id="IPR002350">
    <property type="entry name" value="Kazal_dom"/>
</dbReference>
<dbReference type="InterPro" id="IPR036058">
    <property type="entry name" value="Kazal_dom_sf"/>
</dbReference>
<dbReference type="InterPro" id="IPR017878">
    <property type="entry name" value="TB_dom"/>
</dbReference>
<dbReference type="InterPro" id="IPR036773">
    <property type="entry name" value="TB_dom_sf"/>
</dbReference>
<dbReference type="PANTHER" id="PTHR13866:SF29">
    <property type="entry name" value="FOLLISTATIN"/>
    <property type="match status" value="1"/>
</dbReference>
<dbReference type="PANTHER" id="PTHR13866">
    <property type="entry name" value="SPARC OSTEONECTIN"/>
    <property type="match status" value="1"/>
</dbReference>
<dbReference type="Pfam" id="PF09289">
    <property type="entry name" value="FOLN"/>
    <property type="match status" value="1"/>
</dbReference>
<dbReference type="Pfam" id="PF21333">
    <property type="entry name" value="FST_N"/>
    <property type="match status" value="1"/>
</dbReference>
<dbReference type="Pfam" id="PF07648">
    <property type="entry name" value="Kazal_2"/>
    <property type="match status" value="3"/>
</dbReference>
<dbReference type="SMART" id="SM00274">
    <property type="entry name" value="FOLN"/>
    <property type="match status" value="3"/>
</dbReference>
<dbReference type="SMART" id="SM00280">
    <property type="entry name" value="KAZAL"/>
    <property type="match status" value="3"/>
</dbReference>
<dbReference type="SUPFAM" id="SSF100895">
    <property type="entry name" value="Kazal-type serine protease inhibitors"/>
    <property type="match status" value="3"/>
</dbReference>
<dbReference type="SUPFAM" id="SSF57581">
    <property type="entry name" value="TB module/8-cys domain"/>
    <property type="match status" value="1"/>
</dbReference>
<dbReference type="PROSITE" id="PS51465">
    <property type="entry name" value="KAZAL_2"/>
    <property type="match status" value="3"/>
</dbReference>
<dbReference type="PROSITE" id="PS51364">
    <property type="entry name" value="TB"/>
    <property type="match status" value="1"/>
</dbReference>
<evidence type="ECO:0000250" key="1">
    <source>
        <dbReference type="UniProtKB" id="P19883"/>
    </source>
</evidence>
<evidence type="ECO:0000250" key="2">
    <source>
        <dbReference type="UniProtKB" id="P21674"/>
    </source>
</evidence>
<evidence type="ECO:0000250" key="3">
    <source>
        <dbReference type="UniProtKB" id="P47931"/>
    </source>
</evidence>
<evidence type="ECO:0000255" key="4"/>
<evidence type="ECO:0000255" key="5">
    <source>
        <dbReference type="PROSITE-ProRule" id="PRU00697"/>
    </source>
</evidence>
<evidence type="ECO:0000255" key="6">
    <source>
        <dbReference type="PROSITE-ProRule" id="PRU00798"/>
    </source>
</evidence>
<evidence type="ECO:0000256" key="7">
    <source>
        <dbReference type="SAM" id="MobiDB-lite"/>
    </source>
</evidence>
<evidence type="ECO:0000303" key="8">
    <source>
    </source>
</evidence>
<reference key="1">
    <citation type="journal article" date="1999" name="J. Vet. Med. Sci.">
        <title>Molecular cloning of cDNA for equine follistatin and its gene expression in the reproductive tissues of the mare.</title>
        <authorList>
            <person name="Sugawara Y."/>
            <person name="Yamanouchi K."/>
            <person name="Naito K."/>
            <person name="Tachi C."/>
            <person name="Tojo H."/>
            <person name="Sawasaki T."/>
        </authorList>
    </citation>
    <scope>NUCLEOTIDE SEQUENCE [MRNA]</scope>
    <source>
        <tissue>Follicular cell</tissue>
    </source>
</reference>
<accession>O62650</accession>
<name>FST_HORSE</name>